<comment type="function">
    <text evidence="1 2 3">Catalyzes the hydrolysis of the amide bond of N(2)-acetylated L-amino acids. Cleaves the acetyl group from N-acetyl-L-ornithine to form L-ornithine, an intermediate in L-arginine biosynthesis pathway, and a branchpoint in the synthesis of polyamines.</text>
</comment>
<comment type="catalytic activity">
    <reaction evidence="2 3">
        <text>N(2)-acetyl-L-ornithine + H2O = L-ornithine + acetate</text>
        <dbReference type="Rhea" id="RHEA:15941"/>
        <dbReference type="ChEBI" id="CHEBI:15377"/>
        <dbReference type="ChEBI" id="CHEBI:30089"/>
        <dbReference type="ChEBI" id="CHEBI:46911"/>
        <dbReference type="ChEBI" id="CHEBI:57805"/>
        <dbReference type="EC" id="3.5.1.16"/>
    </reaction>
    <physiologicalReaction direction="left-to-right" evidence="2 3">
        <dbReference type="Rhea" id="RHEA:15942"/>
    </physiologicalReaction>
</comment>
<comment type="cofactor">
    <cofactor evidence="1 2">
        <name>Zn(2+)</name>
        <dbReference type="ChEBI" id="CHEBI:29105"/>
    </cofactor>
    <cofactor evidence="1 2">
        <name>Co(2+)</name>
        <dbReference type="ChEBI" id="CHEBI:48828"/>
    </cofactor>
    <text evidence="1">Binds 2 Zn(2+) or Co(2+) ions per subunit.</text>
</comment>
<comment type="cofactor">
    <cofactor evidence="1">
        <name>glutathione</name>
        <dbReference type="ChEBI" id="CHEBI:57925"/>
    </cofactor>
</comment>
<comment type="biophysicochemical properties">
    <kinetics>
        <KM evidence="3">1.56 uM for N(2)-acetyl-L-ornithine</KM>
        <KM evidence="2">2.5 mM for N(2)-acetyl-L-ornithine</KM>
        <KM evidence="2">1.3 mM for N(2)-acetyl-L-ornithine (in the presence of cobalt)</KM>
        <KM evidence="2">3.8 mM for N(2)-acetyl-L-ornithine (in the presence of cadmium)</KM>
        <KM evidence="2">2.2 mM for N(2)-acetyl-L-ornithine (in the presence of magnesium)</KM>
        <KM evidence="2">1.3 mM for N(2)-acetyl-L-ornithine (in the presence of nickel)</KM>
        <KM evidence="2">7.2 mM for N(2)-acetyl-L-ornithine (in the presence of zinc)</KM>
        <KM evidence="2">1 mM for N(2)-acetyl-L-alanine</KM>
        <KM evidence="2">8.3 mM for N(2)-acetyl-L-asparagine</KM>
        <KM evidence="2">13 mM for N(2)-acetyl-L-cysteine</KM>
        <KM evidence="2">2.4 mM for N(2)-acetyl-L-glutamine</KM>
        <KM evidence="2">7 mM for N(2)-chloroacetylglycine</KM>
        <KM evidence="2">7 mM for N(2)-acetyl-L-leucine</KM>
        <KM evidence="2">4.1 mM for N(2)-acetyl-L-lysine</KM>
        <KM evidence="2">0.81 mM for N(2)-acetyl-L-methionine</KM>
        <KM evidence="2">2 mM for N(2)-formyl-L-methionine</KM>
        <KM evidence="2">6.7 mM for N(2)-acetyl-serine</KM>
    </kinetics>
    <phDependence>
        <text evidence="2">Optimum pH is 7.7.</text>
    </phDependence>
</comment>
<comment type="pathway">
    <text evidence="1 6">Amino-acid biosynthesis; L-arginine biosynthesis; L-ornithine from N(2)-acetyl-L-ornithine (linear): step 1/1.</text>
</comment>
<comment type="subunit">
    <text evidence="1 3">Homodimer.</text>
</comment>
<comment type="subcellular location">
    <subcellularLocation>
        <location evidence="1 5">Cytoplasm</location>
    </subcellularLocation>
</comment>
<comment type="similarity">
    <text evidence="1 5">Belongs to the peptidase M20A family. ArgE subfamily.</text>
</comment>
<reference key="1">
    <citation type="journal article" date="1992" name="J. Bacteriol.">
        <title>Structural and biochemical characterization of the Escherichia coli argE gene product.</title>
        <authorList>
            <person name="Meinnel T."/>
            <person name="Schmitt E."/>
            <person name="Mechulam Y."/>
            <person name="Blanquet S."/>
        </authorList>
    </citation>
    <scope>NUCLEOTIDE SEQUENCE [GENOMIC DNA]</scope>
    <scope>FUNCTION</scope>
    <scope>CATALYTIC ACTIVITY</scope>
    <scope>BIOPHYSICOCHEMICAL PROPERTIES</scope>
    <scope>SUBUNIT</scope>
    <scope>PATHWAY</scope>
    <source>
        <strain>K12</strain>
    </source>
</reference>
<reference key="2">
    <citation type="journal article" date="1992" name="Gene">
        <title>Acetylornithine deacetylase, succinyldiaminopimelate desuccinylase and carboxypeptidase G2 are evolutionarily related.</title>
        <authorList>
            <person name="Boyen A."/>
            <person name="Charlier D.R.M."/>
            <person name="Sakanyan V."/>
            <person name="Mett I."/>
            <person name="Glansdorff N."/>
        </authorList>
    </citation>
    <scope>NUCLEOTIDE SEQUENCE [GENOMIC DNA]</scope>
    <source>
        <strain>K12</strain>
    </source>
</reference>
<reference key="3">
    <citation type="submission" date="2003-06" db="EMBL/GenBank/DDBJ databases">
        <authorList>
            <person name="Xiao X.G."/>
            <person name="Cao K.H."/>
        </authorList>
    </citation>
    <scope>NUCLEOTIDE SEQUENCE [GENOMIC DNA]</scope>
    <source>
        <strain>K12 / DH5-alpha</strain>
        <strain>K12 / JM101 / ATCC 33876 / DSM 3948 / NCIMB 11926</strain>
    </source>
</reference>
<reference key="4">
    <citation type="journal article" date="1993" name="Nucleic Acids Res.">
        <title>Analysis of the Escherichia coli genome. IV. DNA sequence of the region from 89.2 to 92.8 minutes.</title>
        <authorList>
            <person name="Blattner F.R."/>
            <person name="Burland V.D."/>
            <person name="Plunkett G. III"/>
            <person name="Sofia H.J."/>
            <person name="Daniels D.L."/>
        </authorList>
    </citation>
    <scope>NUCLEOTIDE SEQUENCE [LARGE SCALE GENOMIC DNA]</scope>
    <source>
        <strain>K12 / MG1655 / ATCC 47076</strain>
    </source>
</reference>
<reference key="5">
    <citation type="journal article" date="1997" name="Science">
        <title>The complete genome sequence of Escherichia coli K-12.</title>
        <authorList>
            <person name="Blattner F.R."/>
            <person name="Plunkett G. III"/>
            <person name="Bloch C.A."/>
            <person name="Perna N.T."/>
            <person name="Burland V."/>
            <person name="Riley M."/>
            <person name="Collado-Vides J."/>
            <person name="Glasner J.D."/>
            <person name="Rode C.K."/>
            <person name="Mayhew G.F."/>
            <person name="Gregor J."/>
            <person name="Davis N.W."/>
            <person name="Kirkpatrick H.A."/>
            <person name="Goeden M.A."/>
            <person name="Rose D.J."/>
            <person name="Mau B."/>
            <person name="Shao Y."/>
        </authorList>
    </citation>
    <scope>NUCLEOTIDE SEQUENCE [LARGE SCALE GENOMIC DNA]</scope>
    <source>
        <strain>K12 / MG1655 / ATCC 47076</strain>
    </source>
</reference>
<reference key="6">
    <citation type="journal article" date="2006" name="Mol. Syst. Biol.">
        <title>Highly accurate genome sequences of Escherichia coli K-12 strains MG1655 and W3110.</title>
        <authorList>
            <person name="Hayashi K."/>
            <person name="Morooka N."/>
            <person name="Yamamoto Y."/>
            <person name="Fujita K."/>
            <person name="Isono K."/>
            <person name="Choi S."/>
            <person name="Ohtsubo E."/>
            <person name="Baba T."/>
            <person name="Wanner B.L."/>
            <person name="Mori H."/>
            <person name="Horiuchi T."/>
        </authorList>
    </citation>
    <scope>NUCLEOTIDE SEQUENCE [LARGE SCALE GENOMIC DNA]</scope>
    <source>
        <strain>K12 / W3110 / ATCC 27325 / DSM 5911</strain>
    </source>
</reference>
<reference key="7">
    <citation type="journal article" date="1982" name="Nucleic Acids Res.">
        <title>The regulatory region of the divergent argECBH operon in Escherichia coli K-12.</title>
        <authorList>
            <person name="Piette J."/>
            <person name="Cunin R."/>
            <person name="Boyen A."/>
            <person name="Charlier D.R.M."/>
            <person name="Crabeel M."/>
            <person name="van Vliet F."/>
            <person name="Glansdorff N."/>
            <person name="Squires C."/>
            <person name="Squires C.L."/>
        </authorList>
    </citation>
    <scope>NUCLEOTIDE SEQUENCE [GENOMIC DNA] OF 1-11</scope>
    <source>
        <strain>K12</strain>
    </source>
</reference>
<reference key="8">
    <citation type="journal article" date="1982" name="Nucleic Acids Res.">
        <title>IS3 can function as a mobile promoter in E. coli.</title>
        <authorList>
            <person name="Charlier D.R.M."/>
            <person name="Piette J."/>
            <person name="Glansdorff N."/>
        </authorList>
    </citation>
    <scope>NUCLEOTIDE SEQUENCE [GENOMIC DNA] OF 1-11</scope>
</reference>
<reference key="9">
    <citation type="journal article" date="2000" name="Biochemistry">
        <title>Mechanistic analysis of the argE-encoded N-acetylornithine deacetylase.</title>
        <authorList>
            <person name="Javid-Majd F."/>
            <person name="Blanchard J.S."/>
        </authorList>
    </citation>
    <scope>FUNCTION</scope>
    <scope>CATALYTIC ACTIVITY</scope>
    <scope>COFACTOR</scope>
    <scope>BIOPHYSICOCHEMICAL PROPERTIES</scope>
</reference>
<dbReference type="EC" id="3.5.1.16" evidence="2 3"/>
<dbReference type="EMBL" id="X55417">
    <property type="protein sequence ID" value="CAA39076.1"/>
    <property type="molecule type" value="Genomic_DNA"/>
</dbReference>
<dbReference type="EMBL" id="X62807">
    <property type="protein sequence ID" value="CAA44625.1"/>
    <property type="molecule type" value="Genomic_DNA"/>
</dbReference>
<dbReference type="EMBL" id="AY330219">
    <property type="protein sequence ID" value="AAP92671.1"/>
    <property type="molecule type" value="Genomic_DNA"/>
</dbReference>
<dbReference type="EMBL" id="AY331711">
    <property type="protein sequence ID" value="AAP92815.1"/>
    <property type="molecule type" value="Genomic_DNA"/>
</dbReference>
<dbReference type="EMBL" id="U00006">
    <property type="protein sequence ID" value="AAC43063.1"/>
    <property type="molecule type" value="Genomic_DNA"/>
</dbReference>
<dbReference type="EMBL" id="U00096">
    <property type="protein sequence ID" value="AAC76939.1"/>
    <property type="molecule type" value="Genomic_DNA"/>
</dbReference>
<dbReference type="EMBL" id="AP009048">
    <property type="protein sequence ID" value="BAE77354.1"/>
    <property type="molecule type" value="Genomic_DNA"/>
</dbReference>
<dbReference type="EMBL" id="AH005258">
    <property type="protein sequence ID" value="AAB59145.1"/>
    <property type="molecule type" value="Genomic_DNA"/>
</dbReference>
<dbReference type="EMBL" id="J01589">
    <property type="protein sequence ID" value="AAA23484.2"/>
    <property type="molecule type" value="Genomic_DNA"/>
</dbReference>
<dbReference type="PIR" id="B42377">
    <property type="entry name" value="B42377"/>
</dbReference>
<dbReference type="RefSeq" id="NP_418392.1">
    <property type="nucleotide sequence ID" value="NC_000913.3"/>
</dbReference>
<dbReference type="RefSeq" id="WP_001298964.1">
    <property type="nucleotide sequence ID" value="NZ_SSZK01000065.1"/>
</dbReference>
<dbReference type="PDB" id="7RSF">
    <property type="method" value="X-ray"/>
    <property type="resolution" value="2.13 A"/>
    <property type="chains" value="A/B=1-383"/>
</dbReference>
<dbReference type="PDB" id="8UW6">
    <property type="method" value="X-ray"/>
    <property type="resolution" value="1.80 A"/>
    <property type="chains" value="A/B/C/D=1-383"/>
</dbReference>
<dbReference type="PDBsum" id="7RSF"/>
<dbReference type="PDBsum" id="8UW6"/>
<dbReference type="SMR" id="P23908"/>
<dbReference type="BioGRID" id="4259568">
    <property type="interactions" value="71"/>
</dbReference>
<dbReference type="FunCoup" id="P23908">
    <property type="interactions" value="398"/>
</dbReference>
<dbReference type="STRING" id="511145.b3957"/>
<dbReference type="MEROPS" id="M20.974"/>
<dbReference type="jPOST" id="P23908"/>
<dbReference type="PaxDb" id="511145-b3957"/>
<dbReference type="EnsemblBacteria" id="AAC76939">
    <property type="protein sequence ID" value="AAC76939"/>
    <property type="gene ID" value="b3957"/>
</dbReference>
<dbReference type="GeneID" id="948456"/>
<dbReference type="KEGG" id="ecj:JW3929"/>
<dbReference type="KEGG" id="eco:b3957"/>
<dbReference type="KEGG" id="ecoc:C3026_21385"/>
<dbReference type="PATRIC" id="fig|1411691.4.peg.2748"/>
<dbReference type="EchoBASE" id="EB1263"/>
<dbReference type="eggNOG" id="COG0624">
    <property type="taxonomic scope" value="Bacteria"/>
</dbReference>
<dbReference type="HOGENOM" id="CLU_021802_2_4_6"/>
<dbReference type="InParanoid" id="P23908"/>
<dbReference type="OMA" id="RLHKGVM"/>
<dbReference type="OrthoDB" id="3665926at2"/>
<dbReference type="PhylomeDB" id="P23908"/>
<dbReference type="BioCyc" id="EcoCyc:ACETYLORNDEACET-MONOMER"/>
<dbReference type="BioCyc" id="MetaCyc:ACETYLORNDEACET-MONOMER"/>
<dbReference type="BRENDA" id="3.5.1.16">
    <property type="organism ID" value="2026"/>
</dbReference>
<dbReference type="SABIO-RK" id="P23908"/>
<dbReference type="UniPathway" id="UPA00068">
    <property type="reaction ID" value="UER00110"/>
</dbReference>
<dbReference type="PRO" id="PR:P23908"/>
<dbReference type="Proteomes" id="UP000000625">
    <property type="component" value="Chromosome"/>
</dbReference>
<dbReference type="GO" id="GO:0005737">
    <property type="term" value="C:cytoplasm"/>
    <property type="evidence" value="ECO:0007669"/>
    <property type="project" value="UniProtKB-SubCell"/>
</dbReference>
<dbReference type="GO" id="GO:0008777">
    <property type="term" value="F:acetylornithine deacetylase activity"/>
    <property type="evidence" value="ECO:0000314"/>
    <property type="project" value="EcoliWiki"/>
</dbReference>
<dbReference type="GO" id="GO:0050897">
    <property type="term" value="F:cobalt ion binding"/>
    <property type="evidence" value="ECO:0000314"/>
    <property type="project" value="EcoCyc"/>
</dbReference>
<dbReference type="GO" id="GO:0008270">
    <property type="term" value="F:zinc ion binding"/>
    <property type="evidence" value="ECO:0000314"/>
    <property type="project" value="EcoCyc"/>
</dbReference>
<dbReference type="GO" id="GO:0006526">
    <property type="term" value="P:L-arginine biosynthetic process"/>
    <property type="evidence" value="ECO:0000314"/>
    <property type="project" value="EcoCyc"/>
</dbReference>
<dbReference type="CDD" id="cd03894">
    <property type="entry name" value="M20_ArgE"/>
    <property type="match status" value="1"/>
</dbReference>
<dbReference type="FunFam" id="3.30.70.360:FF:000003">
    <property type="entry name" value="Acetylornithine deacetylase"/>
    <property type="match status" value="1"/>
</dbReference>
<dbReference type="Gene3D" id="3.30.70.360">
    <property type="match status" value="1"/>
</dbReference>
<dbReference type="Gene3D" id="3.40.630.10">
    <property type="entry name" value="Zn peptidases"/>
    <property type="match status" value="1"/>
</dbReference>
<dbReference type="HAMAP" id="MF_01108">
    <property type="entry name" value="ArgE"/>
    <property type="match status" value="1"/>
</dbReference>
<dbReference type="InterPro" id="IPR010169">
    <property type="entry name" value="AcOrn-deacetyl"/>
</dbReference>
<dbReference type="InterPro" id="IPR001261">
    <property type="entry name" value="ArgE/DapE_CS"/>
</dbReference>
<dbReference type="InterPro" id="IPR036264">
    <property type="entry name" value="Bact_exopeptidase_dim_dom"/>
</dbReference>
<dbReference type="InterPro" id="IPR002933">
    <property type="entry name" value="Peptidase_M20"/>
</dbReference>
<dbReference type="InterPro" id="IPR011650">
    <property type="entry name" value="Peptidase_M20_dimer"/>
</dbReference>
<dbReference type="InterPro" id="IPR050072">
    <property type="entry name" value="Peptidase_M20A"/>
</dbReference>
<dbReference type="NCBIfam" id="TIGR01892">
    <property type="entry name" value="AcOrn-deacetyl"/>
    <property type="match status" value="1"/>
</dbReference>
<dbReference type="NCBIfam" id="NF003474">
    <property type="entry name" value="PRK05111.1"/>
    <property type="match status" value="1"/>
</dbReference>
<dbReference type="PANTHER" id="PTHR43808">
    <property type="entry name" value="ACETYLORNITHINE DEACETYLASE"/>
    <property type="match status" value="1"/>
</dbReference>
<dbReference type="PANTHER" id="PTHR43808:SF1">
    <property type="entry name" value="ACETYLORNITHINE DEACETYLASE"/>
    <property type="match status" value="1"/>
</dbReference>
<dbReference type="Pfam" id="PF07687">
    <property type="entry name" value="M20_dimer"/>
    <property type="match status" value="1"/>
</dbReference>
<dbReference type="Pfam" id="PF01546">
    <property type="entry name" value="Peptidase_M20"/>
    <property type="match status" value="1"/>
</dbReference>
<dbReference type="SUPFAM" id="SSF55031">
    <property type="entry name" value="Bacterial exopeptidase dimerisation domain"/>
    <property type="match status" value="1"/>
</dbReference>
<dbReference type="SUPFAM" id="SSF53187">
    <property type="entry name" value="Zn-dependent exopeptidases"/>
    <property type="match status" value="1"/>
</dbReference>
<dbReference type="PROSITE" id="PS00758">
    <property type="entry name" value="ARGE_DAPE_CPG2_1"/>
    <property type="match status" value="1"/>
</dbReference>
<dbReference type="PROSITE" id="PS00759">
    <property type="entry name" value="ARGE_DAPE_CPG2_2"/>
    <property type="match status" value="1"/>
</dbReference>
<proteinExistence type="evidence at protein level"/>
<accession>P23908</accession>
<accession>Q2M8Q2</accession>
<evidence type="ECO:0000255" key="1">
    <source>
        <dbReference type="HAMAP-Rule" id="MF_01108"/>
    </source>
</evidence>
<evidence type="ECO:0000269" key="2">
    <source>
    </source>
</evidence>
<evidence type="ECO:0000269" key="3">
    <source>
    </source>
</evidence>
<evidence type="ECO:0000303" key="4">
    <source>
    </source>
</evidence>
<evidence type="ECO:0000305" key="5"/>
<evidence type="ECO:0000305" key="6">
    <source>
    </source>
</evidence>
<evidence type="ECO:0007829" key="7">
    <source>
        <dbReference type="PDB" id="8UW6"/>
    </source>
</evidence>
<organism>
    <name type="scientific">Escherichia coli (strain K12)</name>
    <dbReference type="NCBI Taxonomy" id="83333"/>
    <lineage>
        <taxon>Bacteria</taxon>
        <taxon>Pseudomonadati</taxon>
        <taxon>Pseudomonadota</taxon>
        <taxon>Gammaproteobacteria</taxon>
        <taxon>Enterobacterales</taxon>
        <taxon>Enterobacteriaceae</taxon>
        <taxon>Escherichia</taxon>
    </lineage>
</organism>
<feature type="chain" id="PRO_0000185240" description="Acetylornithine deacetylase">
    <location>
        <begin position="1"/>
        <end position="383"/>
    </location>
</feature>
<feature type="active site" evidence="1">
    <location>
        <position position="82"/>
    </location>
</feature>
<feature type="active site" evidence="1">
    <location>
        <position position="144"/>
    </location>
</feature>
<feature type="binding site" evidence="1">
    <location>
        <position position="80"/>
    </location>
    <ligand>
        <name>Zn(2+)</name>
        <dbReference type="ChEBI" id="CHEBI:29105"/>
        <label>1</label>
    </ligand>
</feature>
<feature type="binding site" evidence="1">
    <location>
        <position position="112"/>
    </location>
    <ligand>
        <name>Zn(2+)</name>
        <dbReference type="ChEBI" id="CHEBI:29105"/>
        <label>1</label>
    </ligand>
</feature>
<feature type="binding site" evidence="1">
    <location>
        <position position="112"/>
    </location>
    <ligand>
        <name>Zn(2+)</name>
        <dbReference type="ChEBI" id="CHEBI:29105"/>
        <label>2</label>
    </ligand>
</feature>
<feature type="binding site" evidence="1">
    <location>
        <position position="145"/>
    </location>
    <ligand>
        <name>Zn(2+)</name>
        <dbReference type="ChEBI" id="CHEBI:29105"/>
        <label>2</label>
    </ligand>
</feature>
<feature type="binding site" evidence="1">
    <location>
        <position position="169"/>
    </location>
    <ligand>
        <name>Zn(2+)</name>
        <dbReference type="ChEBI" id="CHEBI:29105"/>
        <label>1</label>
    </ligand>
</feature>
<feature type="binding site" evidence="1">
    <location>
        <position position="355"/>
    </location>
    <ligand>
        <name>Zn(2+)</name>
        <dbReference type="ChEBI" id="CHEBI:29105"/>
        <label>2</label>
    </ligand>
</feature>
<feature type="helix" evidence="7">
    <location>
        <begin position="8"/>
        <end position="16"/>
    </location>
</feature>
<feature type="turn" evidence="7">
    <location>
        <begin position="26"/>
        <end position="28"/>
    </location>
</feature>
<feature type="helix" evidence="7">
    <location>
        <begin position="33"/>
        <end position="45"/>
    </location>
</feature>
<feature type="strand" evidence="7">
    <location>
        <begin position="49"/>
        <end position="54"/>
    </location>
</feature>
<feature type="strand" evidence="7">
    <location>
        <begin position="58"/>
        <end position="60"/>
    </location>
</feature>
<feature type="strand" evidence="7">
    <location>
        <begin position="62"/>
        <end position="68"/>
    </location>
</feature>
<feature type="strand" evidence="7">
    <location>
        <begin position="75"/>
        <end position="80"/>
    </location>
</feature>
<feature type="turn" evidence="7">
    <location>
        <begin position="88"/>
        <end position="90"/>
    </location>
</feature>
<feature type="strand" evidence="7">
    <location>
        <begin position="99"/>
        <end position="101"/>
    </location>
</feature>
<feature type="strand" evidence="7">
    <location>
        <begin position="104"/>
        <end position="107"/>
    </location>
</feature>
<feature type="turn" evidence="7">
    <location>
        <begin position="108"/>
        <end position="113"/>
    </location>
</feature>
<feature type="helix" evidence="7">
    <location>
        <begin position="114"/>
        <end position="124"/>
    </location>
</feature>
<feature type="helix" evidence="7">
    <location>
        <begin position="129"/>
        <end position="131"/>
    </location>
</feature>
<feature type="strand" evidence="7">
    <location>
        <begin position="136"/>
        <end position="142"/>
    </location>
</feature>
<feature type="turn" evidence="7">
    <location>
        <begin position="144"/>
        <end position="147"/>
    </location>
</feature>
<feature type="helix" evidence="7">
    <location>
        <begin position="149"/>
        <end position="157"/>
    </location>
</feature>
<feature type="strand" evidence="7">
    <location>
        <begin position="163"/>
        <end position="167"/>
    </location>
</feature>
<feature type="strand" evidence="7">
    <location>
        <begin position="176"/>
        <end position="179"/>
    </location>
</feature>
<feature type="strand" evidence="7">
    <location>
        <begin position="182"/>
        <end position="190"/>
    </location>
</feature>
<feature type="helix" evidence="7">
    <location>
        <begin position="199"/>
        <end position="201"/>
    </location>
</feature>
<feature type="helix" evidence="7">
    <location>
        <begin position="205"/>
        <end position="226"/>
    </location>
</feature>
<feature type="strand" evidence="7">
    <location>
        <begin position="232"/>
        <end position="234"/>
    </location>
</feature>
<feature type="strand" evidence="7">
    <location>
        <begin position="238"/>
        <end position="246"/>
    </location>
</feature>
<feature type="strand" evidence="7">
    <location>
        <begin position="256"/>
        <end position="264"/>
    </location>
</feature>
<feature type="helix" evidence="7">
    <location>
        <begin position="271"/>
        <end position="288"/>
    </location>
</feature>
<feature type="turn" evidence="7">
    <location>
        <begin position="290"/>
        <end position="292"/>
    </location>
</feature>
<feature type="strand" evidence="7">
    <location>
        <begin position="293"/>
        <end position="299"/>
    </location>
</feature>
<feature type="helix" evidence="7">
    <location>
        <begin position="312"/>
        <end position="321"/>
    </location>
</feature>
<feature type="strand" evidence="7">
    <location>
        <begin position="326"/>
        <end position="330"/>
    </location>
</feature>
<feature type="helix" evidence="7">
    <location>
        <begin position="334"/>
        <end position="337"/>
    </location>
</feature>
<feature type="turn" evidence="7">
    <location>
        <begin position="338"/>
        <end position="340"/>
    </location>
</feature>
<feature type="strand" evidence="7">
    <location>
        <begin position="343"/>
        <end position="345"/>
    </location>
</feature>
<feature type="turn" evidence="7">
    <location>
        <begin position="351"/>
        <end position="355"/>
    </location>
</feature>
<feature type="strand" evidence="7">
    <location>
        <begin position="360"/>
        <end position="362"/>
    </location>
</feature>
<feature type="helix" evidence="7">
    <location>
        <begin position="363"/>
        <end position="365"/>
    </location>
</feature>
<feature type="helix" evidence="7">
    <location>
        <begin position="366"/>
        <end position="381"/>
    </location>
</feature>
<gene>
    <name evidence="4" type="primary">argE</name>
    <name type="ordered locus">b3957</name>
    <name type="ordered locus">JW3929</name>
</gene>
<protein>
    <recommendedName>
        <fullName>Acetylornithine deacetylase</fullName>
        <shortName>AO</shortName>
        <shortName>Acetylornithinase</shortName>
        <ecNumber evidence="2 3">3.5.1.16</ecNumber>
    </recommendedName>
    <alternativeName>
        <fullName>N-acetylornithinase</fullName>
        <shortName>NAO</shortName>
    </alternativeName>
</protein>
<name>ARGE_ECOLI</name>
<sequence length="383" mass="42347">MKNKLPPFIEIYRALIATPSISATEEALDQSNADLITLLADWFKDLGFNVEVQPVPGTRNKFNMLASIGQGAGGLLLAGHTDTVPFDDGRWTRDPFTLTEHDGKLYGLGTADMKGFFAFILDALRDVDVTKLKKPLYILATADEETSMAGARYFAETTALRPDCAIIGEPTSLQPVRAHKGHISNAIRIQGQSGHSSDPARGVNAIELMHDAIGHILQLRDNLKERYHYEAFTVPYPTLNLGHIHGGDASNRICACCELHMDIRPLPGMTLNELNGLLNDALAPVSERWPGRLTVDELHPPIPGYECPPNHQLVEVVEKLLGAKTEVVNYCTEAPFIQTLCPTLVLGPGSINQAHQPDEYLETRFIKPTRELITQVIHHFCWH</sequence>
<keyword id="KW-0002">3D-structure</keyword>
<keyword id="KW-0028">Amino-acid biosynthesis</keyword>
<keyword id="KW-0055">Arginine biosynthesis</keyword>
<keyword id="KW-0170">Cobalt</keyword>
<keyword id="KW-0963">Cytoplasm</keyword>
<keyword id="KW-0378">Hydrolase</keyword>
<keyword id="KW-0479">Metal-binding</keyword>
<keyword id="KW-1185">Reference proteome</keyword>
<keyword id="KW-0862">Zinc</keyword>